<name>RK13_PYRYE</name>
<feature type="chain" id="PRO_0000261854" description="Large ribosomal subunit protein uL13c">
    <location>
        <begin position="1"/>
        <end position="142"/>
    </location>
</feature>
<comment type="subunit">
    <text evidence="1">Part of the 50S ribosomal subunit.</text>
</comment>
<comment type="subcellular location">
    <subcellularLocation>
        <location>Plastid</location>
        <location>Chloroplast</location>
    </subcellularLocation>
</comment>
<comment type="similarity">
    <text evidence="1">Belongs to the universal ribosomal protein uL13 family.</text>
</comment>
<geneLocation type="chloroplast"/>
<proteinExistence type="inferred from homology"/>
<evidence type="ECO:0000255" key="1">
    <source>
        <dbReference type="HAMAP-Rule" id="MF_01366"/>
    </source>
</evidence>
<evidence type="ECO:0000305" key="2"/>
<accession>Q1XDJ6</accession>
<accession>A0MMA8</accession>
<gene>
    <name evidence="1" type="primary">rpl13</name>
</gene>
<dbReference type="EMBL" id="DQ995201">
    <property type="protein sequence ID" value="ABJ91316.1"/>
    <property type="molecule type" value="Genomic_DNA"/>
</dbReference>
<dbReference type="EMBL" id="AP006715">
    <property type="protein sequence ID" value="BAE92415.1"/>
    <property type="molecule type" value="Genomic_DNA"/>
</dbReference>
<dbReference type="RefSeq" id="YP_536972.1">
    <property type="nucleotide sequence ID" value="NC_007932.1"/>
</dbReference>
<dbReference type="SMR" id="Q1XDJ6"/>
<dbReference type="GeneID" id="3978986"/>
<dbReference type="GO" id="GO:0009507">
    <property type="term" value="C:chloroplast"/>
    <property type="evidence" value="ECO:0007669"/>
    <property type="project" value="UniProtKB-SubCell"/>
</dbReference>
<dbReference type="GO" id="GO:0022625">
    <property type="term" value="C:cytosolic large ribosomal subunit"/>
    <property type="evidence" value="ECO:0007669"/>
    <property type="project" value="TreeGrafter"/>
</dbReference>
<dbReference type="GO" id="GO:0003729">
    <property type="term" value="F:mRNA binding"/>
    <property type="evidence" value="ECO:0007669"/>
    <property type="project" value="TreeGrafter"/>
</dbReference>
<dbReference type="GO" id="GO:0003735">
    <property type="term" value="F:structural constituent of ribosome"/>
    <property type="evidence" value="ECO:0007669"/>
    <property type="project" value="InterPro"/>
</dbReference>
<dbReference type="GO" id="GO:0017148">
    <property type="term" value="P:negative regulation of translation"/>
    <property type="evidence" value="ECO:0007669"/>
    <property type="project" value="TreeGrafter"/>
</dbReference>
<dbReference type="GO" id="GO:0006412">
    <property type="term" value="P:translation"/>
    <property type="evidence" value="ECO:0007669"/>
    <property type="project" value="UniProtKB-UniRule"/>
</dbReference>
<dbReference type="CDD" id="cd00392">
    <property type="entry name" value="Ribosomal_L13"/>
    <property type="match status" value="1"/>
</dbReference>
<dbReference type="FunFam" id="3.90.1180.10:FF:000001">
    <property type="entry name" value="50S ribosomal protein L13"/>
    <property type="match status" value="1"/>
</dbReference>
<dbReference type="Gene3D" id="3.90.1180.10">
    <property type="entry name" value="Ribosomal protein L13"/>
    <property type="match status" value="1"/>
</dbReference>
<dbReference type="HAMAP" id="MF_01366">
    <property type="entry name" value="Ribosomal_uL13"/>
    <property type="match status" value="1"/>
</dbReference>
<dbReference type="InterPro" id="IPR005822">
    <property type="entry name" value="Ribosomal_uL13"/>
</dbReference>
<dbReference type="InterPro" id="IPR005823">
    <property type="entry name" value="Ribosomal_uL13_bac-type"/>
</dbReference>
<dbReference type="InterPro" id="IPR023563">
    <property type="entry name" value="Ribosomal_uL13_CS"/>
</dbReference>
<dbReference type="InterPro" id="IPR036899">
    <property type="entry name" value="Ribosomal_uL13_sf"/>
</dbReference>
<dbReference type="NCBIfam" id="TIGR01066">
    <property type="entry name" value="rplM_bact"/>
    <property type="match status" value="1"/>
</dbReference>
<dbReference type="PANTHER" id="PTHR11545:SF2">
    <property type="entry name" value="LARGE RIBOSOMAL SUBUNIT PROTEIN UL13M"/>
    <property type="match status" value="1"/>
</dbReference>
<dbReference type="PANTHER" id="PTHR11545">
    <property type="entry name" value="RIBOSOMAL PROTEIN L13"/>
    <property type="match status" value="1"/>
</dbReference>
<dbReference type="Pfam" id="PF00572">
    <property type="entry name" value="Ribosomal_L13"/>
    <property type="match status" value="1"/>
</dbReference>
<dbReference type="PIRSF" id="PIRSF002181">
    <property type="entry name" value="Ribosomal_L13"/>
    <property type="match status" value="1"/>
</dbReference>
<dbReference type="SUPFAM" id="SSF52161">
    <property type="entry name" value="Ribosomal protein L13"/>
    <property type="match status" value="1"/>
</dbReference>
<dbReference type="PROSITE" id="PS00783">
    <property type="entry name" value="RIBOSOMAL_L13"/>
    <property type="match status" value="1"/>
</dbReference>
<sequence length="142" mass="15976">MNKTQSPSLNTNSHWYVIDAKNQTLGRISTHISNILRGKNKPSYTPYLDTGDYVIVINSAHVSVSGNKTNQKLYRRHSGQPGGLKVETFDQLQTRLPNRIIEKSVKGMLPKGPLGRKLFTKLKVYSGPIHPHVAQKPQEYIV</sequence>
<protein>
    <recommendedName>
        <fullName evidence="1">Large ribosomal subunit protein uL13c</fullName>
    </recommendedName>
    <alternativeName>
        <fullName evidence="2">50S ribosomal protein L13, chloroplastic</fullName>
    </alternativeName>
</protein>
<reference key="1">
    <citation type="submission" date="2006-09" db="EMBL/GenBank/DDBJ databases">
        <title>Cloning and analysis of the Porphyra yezoensis gene for rpl13.</title>
        <authorList>
            <person name="Wang M.Q."/>
            <person name="Mao Y.X."/>
        </authorList>
    </citation>
    <scope>NUCLEOTIDE SEQUENCE [GENOMIC DNA]</scope>
    <source>
        <strain>Qingdao</strain>
    </source>
</reference>
<reference key="2">
    <citation type="submission" date="2003-11" db="EMBL/GenBank/DDBJ databases">
        <title>Whole genome sequence of Porphyra yezoensis chloroplast.</title>
        <authorList>
            <person name="Kunimoto M."/>
            <person name="Morishima K."/>
            <person name="Yoshikawa M."/>
            <person name="Fukuda S."/>
            <person name="Kobayashi T."/>
            <person name="Kobayashi M."/>
            <person name="Okazaki T."/>
            <person name="Ohara I."/>
            <person name="Nakayama I."/>
        </authorList>
    </citation>
    <scope>NUCLEOTIDE SEQUENCE [LARGE SCALE GENOMIC DNA]</scope>
    <source>
        <strain>U-51</strain>
    </source>
</reference>
<keyword id="KW-0150">Chloroplast</keyword>
<keyword id="KW-0934">Plastid</keyword>
<keyword id="KW-0687">Ribonucleoprotein</keyword>
<keyword id="KW-0689">Ribosomal protein</keyword>
<organism>
    <name type="scientific">Pyropia yezoensis</name>
    <name type="common">Susabi-nori</name>
    <name type="synonym">Porphyra yezoensis</name>
    <dbReference type="NCBI Taxonomy" id="2788"/>
    <lineage>
        <taxon>Eukaryota</taxon>
        <taxon>Rhodophyta</taxon>
        <taxon>Bangiophyceae</taxon>
        <taxon>Bangiales</taxon>
        <taxon>Bangiaceae</taxon>
        <taxon>Pyropia</taxon>
    </lineage>
</organism>